<accession>B1XSG8</accession>
<protein>
    <recommendedName>
        <fullName evidence="1">tRNA-cytidine(32) 2-sulfurtransferase</fullName>
        <ecNumber evidence="1">2.8.1.-</ecNumber>
    </recommendedName>
    <alternativeName>
        <fullName evidence="1">Two-thiocytidine biosynthesis protein A</fullName>
    </alternativeName>
    <alternativeName>
        <fullName evidence="1">tRNA 2-thiocytidine biosynthesis protein TtcA</fullName>
    </alternativeName>
</protein>
<reference key="1">
    <citation type="journal article" date="2013" name="Proc. Natl. Acad. Sci. U.S.A.">
        <title>Polynucleobacter necessarius, a model for genome reduction in both free-living and symbiotic bacteria.</title>
        <authorList>
            <person name="Boscaro V."/>
            <person name="Felletti M."/>
            <person name="Vannini C."/>
            <person name="Ackerman M.S."/>
            <person name="Chain P.S."/>
            <person name="Malfatti S."/>
            <person name="Vergez L.M."/>
            <person name="Shin M."/>
            <person name="Doak T.G."/>
            <person name="Lynch M."/>
            <person name="Petroni G."/>
        </authorList>
    </citation>
    <scope>NUCLEOTIDE SEQUENCE [LARGE SCALE GENOMIC DNA]</scope>
    <source>
        <strain>STIR1</strain>
    </source>
</reference>
<gene>
    <name evidence="1" type="primary">ttcA</name>
    <name type="ordered locus">Pnec_1708</name>
</gene>
<organism>
    <name type="scientific">Polynucleobacter necessarius subsp. necessarius (strain STIR1)</name>
    <dbReference type="NCBI Taxonomy" id="452638"/>
    <lineage>
        <taxon>Bacteria</taxon>
        <taxon>Pseudomonadati</taxon>
        <taxon>Pseudomonadota</taxon>
        <taxon>Betaproteobacteria</taxon>
        <taxon>Burkholderiales</taxon>
        <taxon>Burkholderiaceae</taxon>
        <taxon>Polynucleobacter</taxon>
    </lineage>
</organism>
<proteinExistence type="inferred from homology"/>
<keyword id="KW-0004">4Fe-4S</keyword>
<keyword id="KW-0067">ATP-binding</keyword>
<keyword id="KW-0963">Cytoplasm</keyword>
<keyword id="KW-0408">Iron</keyword>
<keyword id="KW-0411">Iron-sulfur</keyword>
<keyword id="KW-0460">Magnesium</keyword>
<keyword id="KW-0479">Metal-binding</keyword>
<keyword id="KW-0547">Nucleotide-binding</keyword>
<keyword id="KW-0694">RNA-binding</keyword>
<keyword id="KW-0808">Transferase</keyword>
<keyword id="KW-0819">tRNA processing</keyword>
<keyword id="KW-0820">tRNA-binding</keyword>
<dbReference type="EC" id="2.8.1.-" evidence="1"/>
<dbReference type="EMBL" id="CP001010">
    <property type="protein sequence ID" value="ACB44767.1"/>
    <property type="molecule type" value="Genomic_DNA"/>
</dbReference>
<dbReference type="SMR" id="B1XSG8"/>
<dbReference type="STRING" id="452638.Pnec_1708"/>
<dbReference type="KEGG" id="pne:Pnec_1708"/>
<dbReference type="eggNOG" id="COG0037">
    <property type="taxonomic scope" value="Bacteria"/>
</dbReference>
<dbReference type="HOGENOM" id="CLU_026481_0_0_4"/>
<dbReference type="OrthoDB" id="9801054at2"/>
<dbReference type="GO" id="GO:0005737">
    <property type="term" value="C:cytoplasm"/>
    <property type="evidence" value="ECO:0007669"/>
    <property type="project" value="UniProtKB-SubCell"/>
</dbReference>
<dbReference type="GO" id="GO:0051539">
    <property type="term" value="F:4 iron, 4 sulfur cluster binding"/>
    <property type="evidence" value="ECO:0007669"/>
    <property type="project" value="UniProtKB-UniRule"/>
</dbReference>
<dbReference type="GO" id="GO:0005524">
    <property type="term" value="F:ATP binding"/>
    <property type="evidence" value="ECO:0007669"/>
    <property type="project" value="UniProtKB-UniRule"/>
</dbReference>
<dbReference type="GO" id="GO:0000287">
    <property type="term" value="F:magnesium ion binding"/>
    <property type="evidence" value="ECO:0007669"/>
    <property type="project" value="UniProtKB-UniRule"/>
</dbReference>
<dbReference type="GO" id="GO:0016783">
    <property type="term" value="F:sulfurtransferase activity"/>
    <property type="evidence" value="ECO:0007669"/>
    <property type="project" value="UniProtKB-UniRule"/>
</dbReference>
<dbReference type="GO" id="GO:0000049">
    <property type="term" value="F:tRNA binding"/>
    <property type="evidence" value="ECO:0007669"/>
    <property type="project" value="UniProtKB-KW"/>
</dbReference>
<dbReference type="GO" id="GO:0034227">
    <property type="term" value="P:tRNA thio-modification"/>
    <property type="evidence" value="ECO:0007669"/>
    <property type="project" value="UniProtKB-UniRule"/>
</dbReference>
<dbReference type="CDD" id="cd24138">
    <property type="entry name" value="TtcA-like"/>
    <property type="match status" value="1"/>
</dbReference>
<dbReference type="Gene3D" id="3.40.50.620">
    <property type="entry name" value="HUPs"/>
    <property type="match status" value="1"/>
</dbReference>
<dbReference type="HAMAP" id="MF_01850">
    <property type="entry name" value="TtcA"/>
    <property type="match status" value="1"/>
</dbReference>
<dbReference type="InterPro" id="IPR014729">
    <property type="entry name" value="Rossmann-like_a/b/a_fold"/>
</dbReference>
<dbReference type="InterPro" id="IPR011063">
    <property type="entry name" value="TilS/TtcA_N"/>
</dbReference>
<dbReference type="InterPro" id="IPR012089">
    <property type="entry name" value="tRNA_Cyd_32_2_STrfase"/>
</dbReference>
<dbReference type="InterPro" id="IPR035107">
    <property type="entry name" value="tRNA_thiolation_TtcA_Ctu1"/>
</dbReference>
<dbReference type="NCBIfam" id="NF007972">
    <property type="entry name" value="PRK10696.1"/>
    <property type="match status" value="1"/>
</dbReference>
<dbReference type="PANTHER" id="PTHR43686:SF1">
    <property type="entry name" value="AMINOTRAN_5 DOMAIN-CONTAINING PROTEIN"/>
    <property type="match status" value="1"/>
</dbReference>
<dbReference type="PANTHER" id="PTHR43686">
    <property type="entry name" value="SULFURTRANSFERASE-RELATED"/>
    <property type="match status" value="1"/>
</dbReference>
<dbReference type="Pfam" id="PF01171">
    <property type="entry name" value="ATP_bind_3"/>
    <property type="match status" value="1"/>
</dbReference>
<dbReference type="PIRSF" id="PIRSF004976">
    <property type="entry name" value="ATPase_YdaO"/>
    <property type="match status" value="1"/>
</dbReference>
<dbReference type="SUPFAM" id="SSF52402">
    <property type="entry name" value="Adenine nucleotide alpha hydrolases-like"/>
    <property type="match status" value="1"/>
</dbReference>
<feature type="chain" id="PRO_1000188648" description="tRNA-cytidine(32) 2-sulfurtransferase">
    <location>
        <begin position="1"/>
        <end position="302"/>
    </location>
</feature>
<feature type="short sequence motif" description="PP-loop motif" evidence="1">
    <location>
        <begin position="43"/>
        <end position="48"/>
    </location>
</feature>
<feature type="binding site" evidence="1">
    <location>
        <position position="118"/>
    </location>
    <ligand>
        <name>[4Fe-4S] cluster</name>
        <dbReference type="ChEBI" id="CHEBI:49883"/>
    </ligand>
</feature>
<feature type="binding site" evidence="1">
    <location>
        <position position="121"/>
    </location>
    <ligand>
        <name>[4Fe-4S] cluster</name>
        <dbReference type="ChEBI" id="CHEBI:49883"/>
    </ligand>
</feature>
<feature type="binding site" evidence="1">
    <location>
        <position position="209"/>
    </location>
    <ligand>
        <name>[4Fe-4S] cluster</name>
        <dbReference type="ChEBI" id="CHEBI:49883"/>
    </ligand>
</feature>
<comment type="function">
    <text evidence="1">Catalyzes the ATP-dependent 2-thiolation of cytidine in position 32 of tRNA, to form 2-thiocytidine (s(2)C32). The sulfur atoms are provided by the cysteine/cysteine desulfurase (IscS) system.</text>
</comment>
<comment type="catalytic activity">
    <reaction evidence="1">
        <text>cytidine(32) in tRNA + S-sulfanyl-L-cysteinyl-[cysteine desulfurase] + AH2 + ATP = 2-thiocytidine(32) in tRNA + L-cysteinyl-[cysteine desulfurase] + A + AMP + diphosphate + H(+)</text>
        <dbReference type="Rhea" id="RHEA:57048"/>
        <dbReference type="Rhea" id="RHEA-COMP:10288"/>
        <dbReference type="Rhea" id="RHEA-COMP:12157"/>
        <dbReference type="Rhea" id="RHEA-COMP:12158"/>
        <dbReference type="Rhea" id="RHEA-COMP:14821"/>
        <dbReference type="ChEBI" id="CHEBI:13193"/>
        <dbReference type="ChEBI" id="CHEBI:15378"/>
        <dbReference type="ChEBI" id="CHEBI:17499"/>
        <dbReference type="ChEBI" id="CHEBI:29950"/>
        <dbReference type="ChEBI" id="CHEBI:30616"/>
        <dbReference type="ChEBI" id="CHEBI:33019"/>
        <dbReference type="ChEBI" id="CHEBI:61963"/>
        <dbReference type="ChEBI" id="CHEBI:82748"/>
        <dbReference type="ChEBI" id="CHEBI:141453"/>
        <dbReference type="ChEBI" id="CHEBI:456215"/>
    </reaction>
    <physiologicalReaction direction="left-to-right" evidence="1">
        <dbReference type="Rhea" id="RHEA:57049"/>
    </physiologicalReaction>
</comment>
<comment type="cofactor">
    <cofactor evidence="1">
        <name>Mg(2+)</name>
        <dbReference type="ChEBI" id="CHEBI:18420"/>
    </cofactor>
</comment>
<comment type="cofactor">
    <cofactor evidence="1">
        <name>[4Fe-4S] cluster</name>
        <dbReference type="ChEBI" id="CHEBI:49883"/>
    </cofactor>
    <text evidence="1">Binds 1 [4Fe-4S] cluster per subunit. The cluster is chelated by three Cys residues, the fourth Fe has a free coordination site that may bind a sulfur atom transferred from the persulfide of IscS.</text>
</comment>
<comment type="pathway">
    <text evidence="1">tRNA modification.</text>
</comment>
<comment type="subunit">
    <text evidence="1">Homodimer.</text>
</comment>
<comment type="subcellular location">
    <subcellularLocation>
        <location evidence="1">Cytoplasm</location>
    </subcellularLocation>
</comment>
<comment type="miscellaneous">
    <text evidence="1">The thiolation reaction likely consists of two steps: a first activation step by ATP to form an adenylated intermediate of the target base of tRNA, and a second nucleophilic substitution step of the sulfur (S) atom supplied by the hydrosulfide attached to the Fe-S cluster.</text>
</comment>
<comment type="similarity">
    <text evidence="1">Belongs to the TtcA family.</text>
</comment>
<name>TTCA_POLNS</name>
<sequence>MGDIRKIVFEENKLEKKLCRLVGQAICDFGMIEDGDKVMVCVSGGKDSYAMLDLLMKLRERAPINFEIVAVNLDQKQPNFPTNILPNYLKSLDIQYHIEEQDTYSIVKRVIPDGKTTCGLCSRLRRGILYRVADELGATKIALGHHRDDILETLMLNMFYAGKLKGMPPKLRSDDGKHIVIRPLAYVPEKLLERYSADMNFPIIPCDLCGSQPNLQRQVMKEMLRDWEKKHPGRVENLFRSMHHIVPSHLMDGEAFDFKNLEISSELSGIAARSSGDRAIDEADLDELACGTLIQGTYNPPL</sequence>
<evidence type="ECO:0000255" key="1">
    <source>
        <dbReference type="HAMAP-Rule" id="MF_01850"/>
    </source>
</evidence>